<protein>
    <recommendedName>
        <fullName>Pleckstrin homology domain-containing family H member 2</fullName>
    </recommendedName>
</protein>
<name>PKHH2_HUMAN</name>
<feature type="chain" id="PRO_0000307121" description="Pleckstrin homology domain-containing family H member 2">
    <location>
        <begin position="1"/>
        <end position="1493"/>
    </location>
</feature>
<feature type="domain" description="PH 1" evidence="4">
    <location>
        <begin position="703"/>
        <end position="797"/>
    </location>
</feature>
<feature type="domain" description="PH 2" evidence="4">
    <location>
        <begin position="811"/>
        <end position="919"/>
    </location>
</feature>
<feature type="domain" description="MyTH4" evidence="5">
    <location>
        <begin position="955"/>
        <end position="1110"/>
    </location>
</feature>
<feature type="domain" description="FERM" evidence="3">
    <location>
        <begin position="1121"/>
        <end position="1451"/>
    </location>
</feature>
<feature type="region of interest" description="Disordered" evidence="6">
    <location>
        <begin position="202"/>
        <end position="230"/>
    </location>
</feature>
<feature type="region of interest" description="Disordered" evidence="6">
    <location>
        <begin position="245"/>
        <end position="335"/>
    </location>
</feature>
<feature type="region of interest" description="Disordered" evidence="6">
    <location>
        <begin position="363"/>
        <end position="439"/>
    </location>
</feature>
<feature type="region of interest" description="Disordered" evidence="6">
    <location>
        <begin position="613"/>
        <end position="705"/>
    </location>
</feature>
<feature type="region of interest" description="Disordered" evidence="6">
    <location>
        <begin position="1474"/>
        <end position="1493"/>
    </location>
</feature>
<feature type="coiled-coil region" evidence="2">
    <location>
        <begin position="20"/>
        <end position="175"/>
    </location>
</feature>
<feature type="compositionally biased region" description="Basic and acidic residues" evidence="6">
    <location>
        <begin position="208"/>
        <end position="230"/>
    </location>
</feature>
<feature type="compositionally biased region" description="Polar residues" evidence="6">
    <location>
        <begin position="245"/>
        <end position="260"/>
    </location>
</feature>
<feature type="compositionally biased region" description="Polar residues" evidence="6">
    <location>
        <begin position="267"/>
        <end position="281"/>
    </location>
</feature>
<feature type="compositionally biased region" description="Basic and acidic residues" evidence="6">
    <location>
        <begin position="374"/>
        <end position="388"/>
    </location>
</feature>
<feature type="compositionally biased region" description="Polar residues" evidence="6">
    <location>
        <begin position="389"/>
        <end position="409"/>
    </location>
</feature>
<feature type="compositionally biased region" description="Polar residues" evidence="6">
    <location>
        <begin position="421"/>
        <end position="432"/>
    </location>
</feature>
<feature type="compositionally biased region" description="Polar residues" evidence="6">
    <location>
        <begin position="676"/>
        <end position="698"/>
    </location>
</feature>
<feature type="splice variant" id="VSP_028573" description="In isoform 2." evidence="9">
    <location>
        <begin position="1"/>
        <end position="563"/>
    </location>
</feature>
<feature type="splice variant" id="VSP_028574" description="In isoform 3." evidence="8">
    <original>LTTEKHTYYLTADSPNILEEWIKVLQNVL</original>
    <variation>VLNFFFFFFFFVSCQTQFSIIQPNGKEIG</variation>
    <location>
        <begin position="768"/>
        <end position="796"/>
    </location>
</feature>
<feature type="splice variant" id="VSP_028575" description="In isoform 3." evidence="8">
    <location>
        <begin position="797"/>
        <end position="1493"/>
    </location>
</feature>
<feature type="sequence variant" id="VAR_055542" description="In dbSNP:rs10175843.">
    <original>M</original>
    <variation>V</variation>
    <location>
        <position position="228"/>
    </location>
</feature>
<feature type="sequence variant" id="VAR_035344" description="In dbSNP:rs17031297.">
    <original>P</original>
    <variation>T</variation>
    <location>
        <position position="481"/>
    </location>
</feature>
<feature type="sequence variant" id="VAR_035345" description="In dbSNP:rs2278358.">
    <original>R</original>
    <variation>K</variation>
    <location>
        <position position="1069"/>
    </location>
</feature>
<feature type="sequence variant" id="VAR_035346" description="In dbSNP:rs17031368.">
    <original>N</original>
    <variation>S</variation>
    <location>
        <position position="1217"/>
    </location>
</feature>
<feature type="sequence conflict" description="In Ref. 1; CAI46132." evidence="10" ref="1">
    <original>V</original>
    <variation>A</variation>
    <location>
        <position position="451"/>
    </location>
</feature>
<feature type="sequence conflict" description="In Ref. 1; CAI46132." evidence="10" ref="1">
    <original>G</original>
    <variation>C</variation>
    <location>
        <position position="730"/>
    </location>
</feature>
<feature type="sequence conflict" description="In Ref. 1; CAI46132." evidence="10" ref="1">
    <original>A</original>
    <variation>V</variation>
    <location>
        <position position="858"/>
    </location>
</feature>
<reference key="1">
    <citation type="journal article" date="2007" name="BMC Genomics">
        <title>The full-ORF clone resource of the German cDNA consortium.</title>
        <authorList>
            <person name="Bechtel S."/>
            <person name="Rosenfelder H."/>
            <person name="Duda A."/>
            <person name="Schmidt C.P."/>
            <person name="Ernst U."/>
            <person name="Wellenreuther R."/>
            <person name="Mehrle A."/>
            <person name="Schuster C."/>
            <person name="Bahr A."/>
            <person name="Bloecker H."/>
            <person name="Heubner D."/>
            <person name="Hoerlein A."/>
            <person name="Michel G."/>
            <person name="Wedler H."/>
            <person name="Koehrer K."/>
            <person name="Ottenwaelder B."/>
            <person name="Poustka A."/>
            <person name="Wiemann S."/>
            <person name="Schupp I."/>
        </authorList>
    </citation>
    <scope>NUCLEOTIDE SEQUENCE [LARGE SCALE MRNA] (ISOFORMS 1 AND 2)</scope>
    <source>
        <tissue>Adipose tissue</tissue>
        <tissue>Cervix</tissue>
    </source>
</reference>
<reference key="2">
    <citation type="journal article" date="2004" name="Genome Res.">
        <title>The status, quality, and expansion of the NIH full-length cDNA project: the Mammalian Gene Collection (MGC).</title>
        <authorList>
            <consortium name="The MGC Project Team"/>
        </authorList>
    </citation>
    <scope>NUCLEOTIDE SEQUENCE [LARGE SCALE MRNA] (ISOFORM 3)</scope>
    <source>
        <tissue>Placenta</tissue>
    </source>
</reference>
<reference key="3">
    <citation type="submission" date="2002-11" db="EMBL/GenBank/DDBJ databases">
        <title>The nucleotide sequence of a long cDNA clone isolated from human.</title>
        <authorList>
            <person name="Nagase T."/>
            <person name="Kikuno R."/>
            <person name="Ohara O."/>
        </authorList>
    </citation>
    <scope>NUCLEOTIDE SEQUENCE [LARGE SCALE MRNA] OF 45-1493 (ISOFORM 1)</scope>
    <source>
        <tissue>Brain</tissue>
    </source>
</reference>
<reference key="4">
    <citation type="journal article" date="2012" name="Kidney Int.">
        <title>Plekhh2, a novel podocyte protein downregulated in human focal segmental glomerulosclerosis, is involved in matrix adhesion and actin dynamics.</title>
        <authorList>
            <person name="Perisic L."/>
            <person name="Lal M."/>
            <person name="Hulkko J."/>
            <person name="Hultenby K."/>
            <person name="Onfelt B."/>
            <person name="Sun Y."/>
            <person name="Duner F."/>
            <person name="Patrakka J."/>
            <person name="Betsholtz C."/>
            <person name="Uhlen M."/>
            <person name="Brismar H."/>
            <person name="Tryggvason K."/>
            <person name="Wernerson A."/>
            <person name="Pikkarainen T."/>
        </authorList>
    </citation>
    <scope>SUBCELLULAR LOCATION</scope>
    <scope>TISSUE SPECIFICITY</scope>
</reference>
<organism>
    <name type="scientific">Homo sapiens</name>
    <name type="common">Human</name>
    <dbReference type="NCBI Taxonomy" id="9606"/>
    <lineage>
        <taxon>Eukaryota</taxon>
        <taxon>Metazoa</taxon>
        <taxon>Chordata</taxon>
        <taxon>Craniata</taxon>
        <taxon>Vertebrata</taxon>
        <taxon>Euteleostomi</taxon>
        <taxon>Mammalia</taxon>
        <taxon>Eutheria</taxon>
        <taxon>Euarchontoglires</taxon>
        <taxon>Primates</taxon>
        <taxon>Haplorrhini</taxon>
        <taxon>Catarrhini</taxon>
        <taxon>Hominidae</taxon>
        <taxon>Homo</taxon>
    </lineage>
</organism>
<proteinExistence type="evidence at protein level"/>
<evidence type="ECO:0000250" key="1"/>
<evidence type="ECO:0000255" key="2"/>
<evidence type="ECO:0000255" key="3">
    <source>
        <dbReference type="PROSITE-ProRule" id="PRU00084"/>
    </source>
</evidence>
<evidence type="ECO:0000255" key="4">
    <source>
        <dbReference type="PROSITE-ProRule" id="PRU00145"/>
    </source>
</evidence>
<evidence type="ECO:0000255" key="5">
    <source>
        <dbReference type="PROSITE-ProRule" id="PRU00359"/>
    </source>
</evidence>
<evidence type="ECO:0000256" key="6">
    <source>
        <dbReference type="SAM" id="MobiDB-lite"/>
    </source>
</evidence>
<evidence type="ECO:0000269" key="7">
    <source>
    </source>
</evidence>
<evidence type="ECO:0000303" key="8">
    <source>
    </source>
</evidence>
<evidence type="ECO:0000303" key="9">
    <source>
    </source>
</evidence>
<evidence type="ECO:0000305" key="10"/>
<sequence length="1493" mass="168229">MAELSEPEGPVDWKERCVALESQLMKFRVQASKIRELLAEKMQQLERQVIDAERQAEKAFQQVQVMEDKLKAANIQTSESETRLYNKCQDLESLIQEKDDVIQNLELQLEEQKQIRIQEAKIIEEKAAKIKEWVTVKLNELELENQNLRLINQNQTEEIRTMQSKLQEVQGKKSSTVSTLKLSEGQRLSSLTFGCFLSRARSPPQVVKSEEMSKISSKEPEFTEGKDMEEMEIPEKSVDNQVLENNRGQRTLHQTPCGSEQNRKTRTSFATDGGISQNSGAPVSDWSSDEEDGSKGRSKSRCTSTLSSHTSEEGVQCSRMGSEMYLTASDDSSSIFEEETFGIKRPEHKKLYSWQQEAQWKALNSPLGKGNSELSKKEQDSSSDELNKKFQSQRLDYSSSSSEANTPSPILTPALMPKHPNSLSGKGTQLVPSSHLPPPKLRIPNVFSISVALAKRHLSQPQLSSDRMFGTNRNAISMIRPLRPQETDLDLVDGDSTEVLENMDTSCDDGLFSYDSLDSPNSDDQEHCDSAKKVAYSKPPTPPLHRFPSWESRIYAVAKSGIRMSEAFNMESVNKNSAATLSYTTSGLYTSLIYKNMTTPVYTTLKGKATQISSSPFLDDSSGSEEEDSSRSSSRTSESDSRSRSGPGSPRAMKRGVSLSSVASESDYAIPPDAYSTDTEYSQPEQKLPKTCSSSSDNGKNEPLEKSGYLLKMSGKVKSWKRRWFVLKGGELLYYKSPSDVIRKPQGHIELSASCSILRGDNKQTVQLTTEKHTYYLTADSPNILEEWIKVLQNVLRVQAANPLSLQPEGKPTMKGLLTKVKHGYSKRVWCTLIGKTLYYFRSQEDKFPLGQIKLWEAKVEEVDRSCDSDEDYEASGRSLLSTHYTIVIHPKDQGPTYLLIGSKHEKDTWLYHLTVAAGSNNVNVGSEFEQLVCKLLNIDGEPSSQIWRHPTLCHSKEGIISPLTTLPSEALQTEAIKLFKTCQLFINAAVDSPAIDYHISLAQSALQICLTHPELQNEICCQLIKQTRRRQPQNQPGPLQGWQLLALCVGLFLPHHPFLWLLRLHLKRNADSRTEFGKYAIYCQRCVERTQQNGDREARPSRMEILSTLLRNPYHHSLPFSIPVHFMNGIYQVVGFDASTTVEEFLNTLNQDTGMRKPAQSGFALFTDDPSGRDLEHCLQGNIKICDIISKWEQASKEQQPGKCEGTRTVRLTYKNRLYFSVQARGETDREKLLLMYQTNDQIINGLFPLNKDLALEMAALLSQVEIGDFERPFSTPAGHVTNQCKVNQTLKQVIEKFYPKRYRDGCSEEQLRQLCQRLSTRWMALRGHSAADCVRIYLTVARKWPFFGAKLFLAKPITPSSLGSTFLWLAVHEDGLSLLEYNSMRLIVSYVYKSLMTFGGYQDDFMVVINNTHSKDKPTEKLLFAMAKPKILEITLLIASYINNFHQQKAAFHHLSAPALLSAQTRGPQARMMGSQPLLSSSRPTKGPTLL</sequence>
<dbReference type="EMBL" id="AL832207">
    <property type="protein sequence ID" value="CAI46132.1"/>
    <property type="molecule type" value="mRNA"/>
</dbReference>
<dbReference type="EMBL" id="AL833400">
    <property type="protein sequence ID" value="CAD38637.1"/>
    <property type="molecule type" value="mRNA"/>
</dbReference>
<dbReference type="EMBL" id="BC063310">
    <property type="protein sequence ID" value="AAH63310.1"/>
    <property type="molecule type" value="mRNA"/>
</dbReference>
<dbReference type="EMBL" id="AB095948">
    <property type="protein sequence ID" value="BAC23124.1"/>
    <property type="molecule type" value="mRNA"/>
</dbReference>
<dbReference type="CCDS" id="CCDS1812.1">
    <molecule id="Q8IVE3-1"/>
</dbReference>
<dbReference type="RefSeq" id="NP_742066.2">
    <molecule id="Q8IVE3-1"/>
    <property type="nucleotide sequence ID" value="NM_172069.4"/>
</dbReference>
<dbReference type="RefSeq" id="XP_016858842.1">
    <property type="nucleotide sequence ID" value="XM_017003353.1"/>
</dbReference>
<dbReference type="RefSeq" id="XP_047299298.1">
    <molecule id="Q8IVE3-2"/>
    <property type="nucleotide sequence ID" value="XM_047443342.1"/>
</dbReference>
<dbReference type="RefSeq" id="XP_054196501.1">
    <molecule id="Q8IVE3-2"/>
    <property type="nucleotide sequence ID" value="XM_054340526.1"/>
</dbReference>
<dbReference type="SMR" id="Q8IVE3"/>
<dbReference type="BioGRID" id="126228">
    <property type="interactions" value="18"/>
</dbReference>
<dbReference type="FunCoup" id="Q8IVE3">
    <property type="interactions" value="1908"/>
</dbReference>
<dbReference type="IntAct" id="Q8IVE3">
    <property type="interactions" value="12"/>
</dbReference>
<dbReference type="STRING" id="9606.ENSP00000282406"/>
<dbReference type="GlyGen" id="Q8IVE3">
    <property type="glycosylation" value="3 sites, 1 O-linked glycan (2 sites)"/>
</dbReference>
<dbReference type="iPTMnet" id="Q8IVE3"/>
<dbReference type="PhosphoSitePlus" id="Q8IVE3"/>
<dbReference type="BioMuta" id="PLEKHH2"/>
<dbReference type="DMDM" id="158706383"/>
<dbReference type="jPOST" id="Q8IVE3"/>
<dbReference type="MassIVE" id="Q8IVE3"/>
<dbReference type="PaxDb" id="9606-ENSP00000282406"/>
<dbReference type="PeptideAtlas" id="Q8IVE3"/>
<dbReference type="ProteomicsDB" id="70683">
    <molecule id="Q8IVE3-1"/>
</dbReference>
<dbReference type="ProteomicsDB" id="70684">
    <molecule id="Q8IVE3-2"/>
</dbReference>
<dbReference type="ProteomicsDB" id="70685">
    <molecule id="Q8IVE3-3"/>
</dbReference>
<dbReference type="Antibodypedia" id="29827">
    <property type="antibodies" value="82 antibodies from 18 providers"/>
</dbReference>
<dbReference type="DNASU" id="130271"/>
<dbReference type="Ensembl" id="ENST00000282406.9">
    <molecule id="Q8IVE3-1"/>
    <property type="protein sequence ID" value="ENSP00000282406.4"/>
    <property type="gene ID" value="ENSG00000152527.14"/>
</dbReference>
<dbReference type="GeneID" id="130271"/>
<dbReference type="KEGG" id="hsa:130271"/>
<dbReference type="MANE-Select" id="ENST00000282406.9">
    <property type="protein sequence ID" value="ENSP00000282406.4"/>
    <property type="RefSeq nucleotide sequence ID" value="NM_172069.4"/>
    <property type="RefSeq protein sequence ID" value="NP_742066.2"/>
</dbReference>
<dbReference type="UCSC" id="uc010yny.3">
    <molecule id="Q8IVE3-1"/>
    <property type="organism name" value="human"/>
</dbReference>
<dbReference type="AGR" id="HGNC:30506"/>
<dbReference type="CTD" id="130271"/>
<dbReference type="DisGeNET" id="130271"/>
<dbReference type="GeneCards" id="PLEKHH2"/>
<dbReference type="HGNC" id="HGNC:30506">
    <property type="gene designation" value="PLEKHH2"/>
</dbReference>
<dbReference type="HPA" id="ENSG00000152527">
    <property type="expression patterns" value="Low tissue specificity"/>
</dbReference>
<dbReference type="MIM" id="612723">
    <property type="type" value="gene"/>
</dbReference>
<dbReference type="neXtProt" id="NX_Q8IVE3"/>
<dbReference type="OpenTargets" id="ENSG00000152527"/>
<dbReference type="PharmGKB" id="PA134912826"/>
<dbReference type="VEuPathDB" id="HostDB:ENSG00000152527"/>
<dbReference type="eggNOG" id="KOG0248">
    <property type="taxonomic scope" value="Eukaryota"/>
</dbReference>
<dbReference type="GeneTree" id="ENSGT00940000157675"/>
<dbReference type="HOGENOM" id="CLU_001626_3_1_1"/>
<dbReference type="InParanoid" id="Q8IVE3"/>
<dbReference type="OMA" id="NSMRLII"/>
<dbReference type="OrthoDB" id="6285196at2759"/>
<dbReference type="PAN-GO" id="Q8IVE3">
    <property type="GO annotations" value="3 GO annotations based on evolutionary models"/>
</dbReference>
<dbReference type="PhylomeDB" id="Q8IVE3"/>
<dbReference type="TreeFam" id="TF312866"/>
<dbReference type="PathwayCommons" id="Q8IVE3"/>
<dbReference type="SignaLink" id="Q8IVE3"/>
<dbReference type="BioGRID-ORCS" id="130271">
    <property type="hits" value="11 hits in 1141 CRISPR screens"/>
</dbReference>
<dbReference type="ChiTaRS" id="PLEKHH2">
    <property type="organism name" value="human"/>
</dbReference>
<dbReference type="GenomeRNAi" id="130271"/>
<dbReference type="Pharos" id="Q8IVE3">
    <property type="development level" value="Tbio"/>
</dbReference>
<dbReference type="PRO" id="PR:Q8IVE3"/>
<dbReference type="Proteomes" id="UP000005640">
    <property type="component" value="Chromosome 2"/>
</dbReference>
<dbReference type="RNAct" id="Q8IVE3">
    <property type="molecule type" value="protein"/>
</dbReference>
<dbReference type="Bgee" id="ENSG00000152527">
    <property type="expression patterns" value="Expressed in calcaneal tendon and 165 other cell types or tissues"/>
</dbReference>
<dbReference type="ExpressionAtlas" id="Q8IVE3">
    <property type="expression patterns" value="baseline and differential"/>
</dbReference>
<dbReference type="GO" id="GO:0030864">
    <property type="term" value="C:cortical actin cytoskeleton"/>
    <property type="evidence" value="ECO:0000250"/>
    <property type="project" value="UniProtKB"/>
</dbReference>
<dbReference type="GO" id="GO:0005737">
    <property type="term" value="C:cytoplasm"/>
    <property type="evidence" value="ECO:0000314"/>
    <property type="project" value="UniProtKB"/>
</dbReference>
<dbReference type="GO" id="GO:0005829">
    <property type="term" value="C:cytosol"/>
    <property type="evidence" value="ECO:0000314"/>
    <property type="project" value="HPA"/>
</dbReference>
<dbReference type="GO" id="GO:0030027">
    <property type="term" value="C:lamellipodium"/>
    <property type="evidence" value="ECO:0000314"/>
    <property type="project" value="UniProtKB"/>
</dbReference>
<dbReference type="GO" id="GO:0016604">
    <property type="term" value="C:nuclear body"/>
    <property type="evidence" value="ECO:0000314"/>
    <property type="project" value="HPA"/>
</dbReference>
<dbReference type="GO" id="GO:0005654">
    <property type="term" value="C:nucleoplasm"/>
    <property type="evidence" value="ECO:0000314"/>
    <property type="project" value="HPA"/>
</dbReference>
<dbReference type="GO" id="GO:0005886">
    <property type="term" value="C:plasma membrane"/>
    <property type="evidence" value="ECO:0000314"/>
    <property type="project" value="HPA"/>
</dbReference>
<dbReference type="GO" id="GO:0003779">
    <property type="term" value="F:actin binding"/>
    <property type="evidence" value="ECO:0000250"/>
    <property type="project" value="UniProtKB"/>
</dbReference>
<dbReference type="GO" id="GO:0030835">
    <property type="term" value="P:negative regulation of actin filament depolymerization"/>
    <property type="evidence" value="ECO:0000250"/>
    <property type="project" value="UniProtKB"/>
</dbReference>
<dbReference type="CDD" id="cd14473">
    <property type="entry name" value="FERM_B-lobe"/>
    <property type="match status" value="1"/>
</dbReference>
<dbReference type="CDD" id="cd13206">
    <property type="entry name" value="FERM_C-lobe_PLEKHH1_PLEKHH2"/>
    <property type="match status" value="1"/>
</dbReference>
<dbReference type="CDD" id="cd17179">
    <property type="entry name" value="FERM_F1_PLEKHH2"/>
    <property type="match status" value="1"/>
</dbReference>
<dbReference type="CDD" id="cd13282">
    <property type="entry name" value="PH1_PLEKHH1_PLEKHH2"/>
    <property type="match status" value="1"/>
</dbReference>
<dbReference type="FunFam" id="1.25.40.530:FF:000001">
    <property type="entry name" value="Pleckstrin homology domain-containing family H member 2"/>
    <property type="match status" value="1"/>
</dbReference>
<dbReference type="FunFam" id="2.30.29.30:FF:000335">
    <property type="entry name" value="Pleckstrin homology domain-containing family H member 2"/>
    <property type="match status" value="1"/>
</dbReference>
<dbReference type="FunFam" id="2.30.29.30:FF:000346">
    <property type="entry name" value="Pleckstrin homology domain-containing family H member 2"/>
    <property type="match status" value="1"/>
</dbReference>
<dbReference type="FunFam" id="1.20.80.10:FF:000021">
    <property type="entry name" value="pleckstrin homology domain-containing family H member 2"/>
    <property type="match status" value="1"/>
</dbReference>
<dbReference type="FunFam" id="3.10.20.90:FF:000125">
    <property type="entry name" value="pleckstrin homology domain-containing family H member 2"/>
    <property type="match status" value="1"/>
</dbReference>
<dbReference type="FunFam" id="2.30.29.30:FF:000295">
    <property type="entry name" value="pleckstrin homology domain-containing family H member 2 isoform X1"/>
    <property type="match status" value="1"/>
</dbReference>
<dbReference type="Gene3D" id="1.20.80.10">
    <property type="match status" value="1"/>
</dbReference>
<dbReference type="Gene3D" id="1.25.40.530">
    <property type="entry name" value="MyTH4 domain"/>
    <property type="match status" value="1"/>
</dbReference>
<dbReference type="Gene3D" id="3.10.20.90">
    <property type="entry name" value="Phosphatidylinositol 3-kinase Catalytic Subunit, Chain A, domain 1"/>
    <property type="match status" value="1"/>
</dbReference>
<dbReference type="Gene3D" id="2.30.29.30">
    <property type="entry name" value="Pleckstrin-homology domain (PH domain)/Phosphotyrosine-binding domain (PTB)"/>
    <property type="match status" value="3"/>
</dbReference>
<dbReference type="InterPro" id="IPR019749">
    <property type="entry name" value="Band_41_domain"/>
</dbReference>
<dbReference type="InterPro" id="IPR014352">
    <property type="entry name" value="FERM/acyl-CoA-bd_prot_sf"/>
</dbReference>
<dbReference type="InterPro" id="IPR035963">
    <property type="entry name" value="FERM_2"/>
</dbReference>
<dbReference type="InterPro" id="IPR019748">
    <property type="entry name" value="FERM_central"/>
</dbReference>
<dbReference type="InterPro" id="IPR000299">
    <property type="entry name" value="FERM_domain"/>
</dbReference>
<dbReference type="InterPro" id="IPR000857">
    <property type="entry name" value="MyTH4_dom"/>
</dbReference>
<dbReference type="InterPro" id="IPR038185">
    <property type="entry name" value="MyTH4_dom_sf"/>
</dbReference>
<dbReference type="InterPro" id="IPR011993">
    <property type="entry name" value="PH-like_dom_sf"/>
</dbReference>
<dbReference type="InterPro" id="IPR001849">
    <property type="entry name" value="PH_domain"/>
</dbReference>
<dbReference type="PANTHER" id="PTHR22903:SF3">
    <property type="entry name" value="PLECKSTRIN HOMOLOGY DOMAIN-CONTAINING FAMILY H MEMBER 2"/>
    <property type="match status" value="1"/>
</dbReference>
<dbReference type="PANTHER" id="PTHR22903">
    <property type="entry name" value="PLEKHH PROTEIN"/>
    <property type="match status" value="1"/>
</dbReference>
<dbReference type="Pfam" id="PF00373">
    <property type="entry name" value="FERM_M"/>
    <property type="match status" value="1"/>
</dbReference>
<dbReference type="Pfam" id="PF00784">
    <property type="entry name" value="MyTH4"/>
    <property type="match status" value="1"/>
</dbReference>
<dbReference type="Pfam" id="PF00169">
    <property type="entry name" value="PH"/>
    <property type="match status" value="1"/>
</dbReference>
<dbReference type="Pfam" id="PF21989">
    <property type="entry name" value="RA_2"/>
    <property type="match status" value="1"/>
</dbReference>
<dbReference type="SMART" id="SM00295">
    <property type="entry name" value="B41"/>
    <property type="match status" value="1"/>
</dbReference>
<dbReference type="SMART" id="SM00139">
    <property type="entry name" value="MyTH4"/>
    <property type="match status" value="1"/>
</dbReference>
<dbReference type="SMART" id="SM00233">
    <property type="entry name" value="PH"/>
    <property type="match status" value="2"/>
</dbReference>
<dbReference type="SUPFAM" id="SSF50729">
    <property type="entry name" value="PH domain-like"/>
    <property type="match status" value="2"/>
</dbReference>
<dbReference type="SUPFAM" id="SSF47031">
    <property type="entry name" value="Second domain of FERM"/>
    <property type="match status" value="1"/>
</dbReference>
<dbReference type="PROSITE" id="PS50057">
    <property type="entry name" value="FERM_3"/>
    <property type="match status" value="1"/>
</dbReference>
<dbReference type="PROSITE" id="PS51016">
    <property type="entry name" value="MYTH4"/>
    <property type="match status" value="1"/>
</dbReference>
<dbReference type="PROSITE" id="PS50003">
    <property type="entry name" value="PH_DOMAIN"/>
    <property type="match status" value="2"/>
</dbReference>
<keyword id="KW-0025">Alternative splicing</keyword>
<keyword id="KW-1003">Cell membrane</keyword>
<keyword id="KW-0966">Cell projection</keyword>
<keyword id="KW-0175">Coiled coil</keyword>
<keyword id="KW-0963">Cytoplasm</keyword>
<keyword id="KW-0206">Cytoskeleton</keyword>
<keyword id="KW-0472">Membrane</keyword>
<keyword id="KW-1267">Proteomics identification</keyword>
<keyword id="KW-1185">Reference proteome</keyword>
<keyword id="KW-0677">Repeat</keyword>
<gene>
    <name type="primary">PLEKHH2</name>
    <name type="synonym">KIAA2028</name>
</gene>
<comment type="function">
    <text>In the kidney glomerulus may play a role in linking podocyte foot processes to the glomerular basement membrane. May be involved in stabilization of F-actin by attenuating its depolymerization. Can recruit TGFB1I1 from focal adhesions to podocyte lamellipodia.</text>
</comment>
<comment type="subunit">
    <text evidence="1">Self-associates. Interacts with TGFB1I1 (By similarity).</text>
</comment>
<comment type="interaction">
    <interactant intactId="EBI-2815745">
        <id>Q8IVE3</id>
    </interactant>
    <interactant intactId="EBI-744222">
        <id>O60711</id>
        <label>LPXN</label>
    </interactant>
    <organismsDiffer>false</organismsDiffer>
    <experiments>5</experiments>
</comment>
<comment type="interaction">
    <interactant intactId="EBI-11954248">
        <id>Q8IVE3-3</id>
    </interactant>
    <interactant intactId="EBI-11954250">
        <id>P49023-2</id>
        <label>PXN</label>
    </interactant>
    <organismsDiffer>false</organismsDiffer>
    <experiments>3</experiments>
</comment>
<comment type="subcellular location">
    <subcellularLocation>
        <location evidence="7">Cytoplasm</location>
    </subcellularLocation>
    <subcellularLocation>
        <location evidence="7">Cytoplasm</location>
        <location evidence="7">Cytoskeleton</location>
    </subcellularLocation>
    <subcellularLocation>
        <location evidence="7">Cell membrane</location>
        <topology evidence="7">Peripheral membrane protein</topology>
        <orientation evidence="7">Cytoplasmic side</orientation>
    </subcellularLocation>
    <subcellularLocation>
        <location evidence="7">Cell projection</location>
        <location evidence="7">Lamellipodium</location>
    </subcellularLocation>
    <text>Localizes to foot process of podocytes. Localization to peripheral regions of lamellipodia seems to be dependent on PI3K.</text>
</comment>
<comment type="alternative products">
    <event type="alternative splicing"/>
    <isoform>
        <id>Q8IVE3-1</id>
        <name>1</name>
        <sequence type="displayed"/>
    </isoform>
    <isoform>
        <id>Q8IVE3-2</id>
        <name>2</name>
        <sequence type="described" ref="VSP_028573"/>
    </isoform>
    <isoform>
        <id>Q8IVE3-3</id>
        <name>3</name>
        <sequence type="described" ref="VSP_028574 VSP_028575"/>
    </isoform>
</comment>
<comment type="tissue specificity">
    <text evidence="7">Kidney. Reduced expression in patients with focal segmental glomerulosclerosis.</text>
</comment>
<accession>Q8IVE3</accession>
<accession>Q5JPJ6</accession>
<accession>Q6P4Q1</accession>
<accession>Q8N3Q3</accession>